<organism>
    <name type="scientific">Escherichia coli (strain K12 / MC4100 / BW2952)</name>
    <dbReference type="NCBI Taxonomy" id="595496"/>
    <lineage>
        <taxon>Bacteria</taxon>
        <taxon>Pseudomonadati</taxon>
        <taxon>Pseudomonadota</taxon>
        <taxon>Gammaproteobacteria</taxon>
        <taxon>Enterobacterales</taxon>
        <taxon>Enterobacteriaceae</taxon>
        <taxon>Escherichia</taxon>
    </lineage>
</organism>
<accession>C4ZS48</accession>
<reference key="1">
    <citation type="journal article" date="2009" name="J. Bacteriol.">
        <title>Genomic sequencing reveals regulatory mutations and recombinational events in the widely used MC4100 lineage of Escherichia coli K-12.</title>
        <authorList>
            <person name="Ferenci T."/>
            <person name="Zhou Z."/>
            <person name="Betteridge T."/>
            <person name="Ren Y."/>
            <person name="Liu Y."/>
            <person name="Feng L."/>
            <person name="Reeves P.R."/>
            <person name="Wang L."/>
        </authorList>
    </citation>
    <scope>NUCLEOTIDE SEQUENCE [LARGE SCALE GENOMIC DNA]</scope>
    <source>
        <strain>K12 / MC4100 / BW2952</strain>
    </source>
</reference>
<sequence>MIIYLHGFDSNSPGNHEKVLQLQFIDPDVRLISYSTRHPKHDMQHLLKEVDKMLQLNVDERPLICGVGLGGYWAERIGFLCDIRQVIFNPNLFPYENMEGKIDRPEEYADIATKCVTNFREKNRDRCLVILSRNDEALNSQRTSEELHHYYEIVWDEEQTHKFKNISPHLQRIKAFKTLG</sequence>
<feature type="chain" id="PRO_1000213422" description="UPF0227 protein YcfP">
    <location>
        <begin position="1"/>
        <end position="180"/>
    </location>
</feature>
<comment type="similarity">
    <text evidence="1">Belongs to the UPF0227 family.</text>
</comment>
<proteinExistence type="inferred from homology"/>
<protein>
    <recommendedName>
        <fullName evidence="1">UPF0227 protein YcfP</fullName>
    </recommendedName>
</protein>
<dbReference type="EMBL" id="CP001396">
    <property type="protein sequence ID" value="ACR62464.1"/>
    <property type="molecule type" value="Genomic_DNA"/>
</dbReference>
<dbReference type="RefSeq" id="WP_000587933.1">
    <property type="nucleotide sequence ID" value="NC_012759.1"/>
</dbReference>
<dbReference type="SMR" id="C4ZS48"/>
<dbReference type="ESTHER" id="ecoli-ycfp">
    <property type="family name" value="abh_upf00227"/>
</dbReference>
<dbReference type="GeneID" id="93776300"/>
<dbReference type="KEGG" id="ebw:BWG_0956"/>
<dbReference type="HOGENOM" id="CLU_128769_0_0_6"/>
<dbReference type="FunFam" id="3.40.50.1820:FF:000007">
    <property type="entry name" value="UPF0227 protein YcfP"/>
    <property type="match status" value="1"/>
</dbReference>
<dbReference type="Gene3D" id="3.40.50.1820">
    <property type="entry name" value="alpha/beta hydrolase"/>
    <property type="match status" value="1"/>
</dbReference>
<dbReference type="HAMAP" id="MF_01047">
    <property type="entry name" value="UPF0227"/>
    <property type="match status" value="1"/>
</dbReference>
<dbReference type="InterPro" id="IPR029058">
    <property type="entry name" value="AB_hydrolase_fold"/>
</dbReference>
<dbReference type="InterPro" id="IPR022987">
    <property type="entry name" value="UPF0227"/>
</dbReference>
<dbReference type="InterPro" id="IPR008886">
    <property type="entry name" value="UPF0227/Esterase_YqiA"/>
</dbReference>
<dbReference type="NCBIfam" id="NF003431">
    <property type="entry name" value="PRK04940.1"/>
    <property type="match status" value="1"/>
</dbReference>
<dbReference type="PANTHER" id="PTHR35602">
    <property type="entry name" value="ESTERASE YQIA-RELATED"/>
    <property type="match status" value="1"/>
</dbReference>
<dbReference type="PANTHER" id="PTHR35602:SF2">
    <property type="entry name" value="UPF0227 PROTEIN YCFP"/>
    <property type="match status" value="1"/>
</dbReference>
<dbReference type="Pfam" id="PF05728">
    <property type="entry name" value="UPF0227"/>
    <property type="match status" value="1"/>
</dbReference>
<dbReference type="SUPFAM" id="SSF53474">
    <property type="entry name" value="alpha/beta-Hydrolases"/>
    <property type="match status" value="1"/>
</dbReference>
<evidence type="ECO:0000255" key="1">
    <source>
        <dbReference type="HAMAP-Rule" id="MF_01047"/>
    </source>
</evidence>
<name>YCFP_ECOBW</name>
<gene>
    <name evidence="1" type="primary">ycfP</name>
    <name type="ordered locus">BWG_0956</name>
</gene>